<keyword id="KW-0021">Allosteric enzyme</keyword>
<keyword id="KW-0328">Glycosyltransferase</keyword>
<keyword id="KW-0342">GTP-binding</keyword>
<keyword id="KW-0460">Magnesium</keyword>
<keyword id="KW-0547">Nucleotide-binding</keyword>
<keyword id="KW-0808">Transferase</keyword>
<gene>
    <name evidence="1" type="primary">upp</name>
    <name type="ordered locus">RoseRS_0581</name>
</gene>
<organism>
    <name type="scientific">Roseiflexus sp. (strain RS-1)</name>
    <dbReference type="NCBI Taxonomy" id="357808"/>
    <lineage>
        <taxon>Bacteria</taxon>
        <taxon>Bacillati</taxon>
        <taxon>Chloroflexota</taxon>
        <taxon>Chloroflexia</taxon>
        <taxon>Chloroflexales</taxon>
        <taxon>Roseiflexineae</taxon>
        <taxon>Roseiflexaceae</taxon>
        <taxon>Roseiflexus</taxon>
    </lineage>
</organism>
<sequence>MAQVMISQHPLVQHKLTLLRRATTEPKKFRELVRELSQFLLYEATLDLPLQERIVDTPLAPYHGHRIAERVGLVPILRAGLGMVDPILDLIPTAHVWHLGLYRDHATLKPVTYYNKLPPEVDVDLCLVLDPMLATGGSAVAAVTVLKEWGASRIKFLGLIAAPEGVQALHQEHPDVPIHLAAIDDCLNDHGYIVPGLGDAGDRLFGTG</sequence>
<feature type="chain" id="PRO_1000085634" description="Uracil phosphoribosyltransferase">
    <location>
        <begin position="1"/>
        <end position="208"/>
    </location>
</feature>
<feature type="binding site" evidence="1">
    <location>
        <position position="78"/>
    </location>
    <ligand>
        <name>5-phospho-alpha-D-ribose 1-diphosphate</name>
        <dbReference type="ChEBI" id="CHEBI:58017"/>
    </ligand>
</feature>
<feature type="binding site" evidence="1">
    <location>
        <position position="103"/>
    </location>
    <ligand>
        <name>5-phospho-alpha-D-ribose 1-diphosphate</name>
        <dbReference type="ChEBI" id="CHEBI:58017"/>
    </ligand>
</feature>
<feature type="binding site" evidence="1">
    <location>
        <begin position="130"/>
        <end position="138"/>
    </location>
    <ligand>
        <name>5-phospho-alpha-D-ribose 1-diphosphate</name>
        <dbReference type="ChEBI" id="CHEBI:58017"/>
    </ligand>
</feature>
<feature type="binding site" evidence="1">
    <location>
        <position position="193"/>
    </location>
    <ligand>
        <name>uracil</name>
        <dbReference type="ChEBI" id="CHEBI:17568"/>
    </ligand>
</feature>
<feature type="binding site" evidence="1">
    <location>
        <begin position="198"/>
        <end position="200"/>
    </location>
    <ligand>
        <name>uracil</name>
        <dbReference type="ChEBI" id="CHEBI:17568"/>
    </ligand>
</feature>
<feature type="binding site" evidence="1">
    <location>
        <position position="199"/>
    </location>
    <ligand>
        <name>5-phospho-alpha-D-ribose 1-diphosphate</name>
        <dbReference type="ChEBI" id="CHEBI:58017"/>
    </ligand>
</feature>
<accession>A5UQV0</accession>
<dbReference type="EC" id="2.4.2.9" evidence="1"/>
<dbReference type="EMBL" id="CP000686">
    <property type="protein sequence ID" value="ABQ89003.1"/>
    <property type="molecule type" value="Genomic_DNA"/>
</dbReference>
<dbReference type="RefSeq" id="WP_011955359.1">
    <property type="nucleotide sequence ID" value="NC_009523.1"/>
</dbReference>
<dbReference type="SMR" id="A5UQV0"/>
<dbReference type="STRING" id="357808.RoseRS_0581"/>
<dbReference type="KEGG" id="rrs:RoseRS_0581"/>
<dbReference type="eggNOG" id="COG0035">
    <property type="taxonomic scope" value="Bacteria"/>
</dbReference>
<dbReference type="HOGENOM" id="CLU_067096_2_2_0"/>
<dbReference type="OrthoDB" id="9781675at2"/>
<dbReference type="UniPathway" id="UPA00574">
    <property type="reaction ID" value="UER00636"/>
</dbReference>
<dbReference type="Proteomes" id="UP000006554">
    <property type="component" value="Chromosome"/>
</dbReference>
<dbReference type="GO" id="GO:0005525">
    <property type="term" value="F:GTP binding"/>
    <property type="evidence" value="ECO:0007669"/>
    <property type="project" value="UniProtKB-KW"/>
</dbReference>
<dbReference type="GO" id="GO:0000287">
    <property type="term" value="F:magnesium ion binding"/>
    <property type="evidence" value="ECO:0007669"/>
    <property type="project" value="UniProtKB-UniRule"/>
</dbReference>
<dbReference type="GO" id="GO:0004845">
    <property type="term" value="F:uracil phosphoribosyltransferase activity"/>
    <property type="evidence" value="ECO:0007669"/>
    <property type="project" value="UniProtKB-UniRule"/>
</dbReference>
<dbReference type="GO" id="GO:0044206">
    <property type="term" value="P:UMP salvage"/>
    <property type="evidence" value="ECO:0007669"/>
    <property type="project" value="UniProtKB-UniRule"/>
</dbReference>
<dbReference type="GO" id="GO:0006223">
    <property type="term" value="P:uracil salvage"/>
    <property type="evidence" value="ECO:0007669"/>
    <property type="project" value="InterPro"/>
</dbReference>
<dbReference type="CDD" id="cd06223">
    <property type="entry name" value="PRTases_typeI"/>
    <property type="match status" value="1"/>
</dbReference>
<dbReference type="FunFam" id="3.40.50.2020:FF:000003">
    <property type="entry name" value="Uracil phosphoribosyltransferase"/>
    <property type="match status" value="1"/>
</dbReference>
<dbReference type="Gene3D" id="3.40.50.2020">
    <property type="match status" value="1"/>
</dbReference>
<dbReference type="HAMAP" id="MF_01218_B">
    <property type="entry name" value="Upp_B"/>
    <property type="match status" value="1"/>
</dbReference>
<dbReference type="InterPro" id="IPR000836">
    <property type="entry name" value="PRibTrfase_dom"/>
</dbReference>
<dbReference type="InterPro" id="IPR029057">
    <property type="entry name" value="PRTase-like"/>
</dbReference>
<dbReference type="InterPro" id="IPR034332">
    <property type="entry name" value="Upp_B"/>
</dbReference>
<dbReference type="InterPro" id="IPR050054">
    <property type="entry name" value="UPRTase/APRTase"/>
</dbReference>
<dbReference type="InterPro" id="IPR005765">
    <property type="entry name" value="Ura_phspho_trans"/>
</dbReference>
<dbReference type="NCBIfam" id="NF001097">
    <property type="entry name" value="PRK00129.1"/>
    <property type="match status" value="1"/>
</dbReference>
<dbReference type="NCBIfam" id="TIGR01091">
    <property type="entry name" value="upp"/>
    <property type="match status" value="1"/>
</dbReference>
<dbReference type="PANTHER" id="PTHR32315">
    <property type="entry name" value="ADENINE PHOSPHORIBOSYLTRANSFERASE"/>
    <property type="match status" value="1"/>
</dbReference>
<dbReference type="PANTHER" id="PTHR32315:SF4">
    <property type="entry name" value="URACIL PHOSPHORIBOSYLTRANSFERASE, CHLOROPLASTIC"/>
    <property type="match status" value="1"/>
</dbReference>
<dbReference type="Pfam" id="PF14681">
    <property type="entry name" value="UPRTase"/>
    <property type="match status" value="1"/>
</dbReference>
<dbReference type="SUPFAM" id="SSF53271">
    <property type="entry name" value="PRTase-like"/>
    <property type="match status" value="1"/>
</dbReference>
<proteinExistence type="inferred from homology"/>
<reference key="1">
    <citation type="submission" date="2007-04" db="EMBL/GenBank/DDBJ databases">
        <title>Complete sequence of Roseiflexus sp. RS-1.</title>
        <authorList>
            <consortium name="US DOE Joint Genome Institute"/>
            <person name="Copeland A."/>
            <person name="Lucas S."/>
            <person name="Lapidus A."/>
            <person name="Barry K."/>
            <person name="Detter J.C."/>
            <person name="Glavina del Rio T."/>
            <person name="Hammon N."/>
            <person name="Israni S."/>
            <person name="Dalin E."/>
            <person name="Tice H."/>
            <person name="Pitluck S."/>
            <person name="Chertkov O."/>
            <person name="Brettin T."/>
            <person name="Bruce D."/>
            <person name="Han C."/>
            <person name="Schmutz J."/>
            <person name="Larimer F."/>
            <person name="Land M."/>
            <person name="Hauser L."/>
            <person name="Kyrpides N."/>
            <person name="Mikhailova N."/>
            <person name="Bryant D.A."/>
            <person name="Richardson P."/>
        </authorList>
    </citation>
    <scope>NUCLEOTIDE SEQUENCE [LARGE SCALE GENOMIC DNA]</scope>
    <source>
        <strain>RS-1</strain>
    </source>
</reference>
<name>UPP_ROSS1</name>
<evidence type="ECO:0000255" key="1">
    <source>
        <dbReference type="HAMAP-Rule" id="MF_01218"/>
    </source>
</evidence>
<protein>
    <recommendedName>
        <fullName evidence="1">Uracil phosphoribosyltransferase</fullName>
        <ecNumber evidence="1">2.4.2.9</ecNumber>
    </recommendedName>
    <alternativeName>
        <fullName evidence="1">UMP pyrophosphorylase</fullName>
    </alternativeName>
    <alternativeName>
        <fullName evidence="1">UPRTase</fullName>
    </alternativeName>
</protein>
<comment type="function">
    <text evidence="1">Catalyzes the conversion of uracil and 5-phospho-alpha-D-ribose 1-diphosphate (PRPP) to UMP and diphosphate.</text>
</comment>
<comment type="catalytic activity">
    <reaction evidence="1">
        <text>UMP + diphosphate = 5-phospho-alpha-D-ribose 1-diphosphate + uracil</text>
        <dbReference type="Rhea" id="RHEA:13017"/>
        <dbReference type="ChEBI" id="CHEBI:17568"/>
        <dbReference type="ChEBI" id="CHEBI:33019"/>
        <dbReference type="ChEBI" id="CHEBI:57865"/>
        <dbReference type="ChEBI" id="CHEBI:58017"/>
        <dbReference type="EC" id="2.4.2.9"/>
    </reaction>
</comment>
<comment type="cofactor">
    <cofactor evidence="1">
        <name>Mg(2+)</name>
        <dbReference type="ChEBI" id="CHEBI:18420"/>
    </cofactor>
    <text evidence="1">Binds 1 Mg(2+) ion per subunit. The magnesium is bound as Mg-PRPP.</text>
</comment>
<comment type="activity regulation">
    <text evidence="1">Allosterically activated by GTP.</text>
</comment>
<comment type="pathway">
    <text evidence="1">Pyrimidine metabolism; UMP biosynthesis via salvage pathway; UMP from uracil: step 1/1.</text>
</comment>
<comment type="similarity">
    <text evidence="1">Belongs to the UPRTase family.</text>
</comment>